<protein>
    <recommendedName>
        <fullName evidence="1">Cobyric acid synthase</fullName>
    </recommendedName>
</protein>
<reference key="1">
    <citation type="submission" date="2008-06" db="EMBL/GenBank/DDBJ databases">
        <title>Complete sequence of Pelodictyon phaeoclathratiforme BU-1.</title>
        <authorList>
            <consortium name="US DOE Joint Genome Institute"/>
            <person name="Lucas S."/>
            <person name="Copeland A."/>
            <person name="Lapidus A."/>
            <person name="Glavina del Rio T."/>
            <person name="Dalin E."/>
            <person name="Tice H."/>
            <person name="Bruce D."/>
            <person name="Goodwin L."/>
            <person name="Pitluck S."/>
            <person name="Schmutz J."/>
            <person name="Larimer F."/>
            <person name="Land M."/>
            <person name="Hauser L."/>
            <person name="Kyrpides N."/>
            <person name="Mikhailova N."/>
            <person name="Liu Z."/>
            <person name="Li T."/>
            <person name="Zhao F."/>
            <person name="Overmann J."/>
            <person name="Bryant D.A."/>
            <person name="Richardson P."/>
        </authorList>
    </citation>
    <scope>NUCLEOTIDE SEQUENCE [LARGE SCALE GENOMIC DNA]</scope>
    <source>
        <strain>DSM 5477 / BU-1</strain>
    </source>
</reference>
<accession>B4SH62</accession>
<name>COBQ_PELPB</name>
<dbReference type="EMBL" id="CP001110">
    <property type="protein sequence ID" value="ACF43529.1"/>
    <property type="molecule type" value="Genomic_DNA"/>
</dbReference>
<dbReference type="RefSeq" id="WP_012508020.1">
    <property type="nucleotide sequence ID" value="NC_011060.1"/>
</dbReference>
<dbReference type="SMR" id="B4SH62"/>
<dbReference type="STRING" id="324925.Ppha_1264"/>
<dbReference type="KEGG" id="pph:Ppha_1264"/>
<dbReference type="eggNOG" id="COG1492">
    <property type="taxonomic scope" value="Bacteria"/>
</dbReference>
<dbReference type="HOGENOM" id="CLU_019250_2_2_10"/>
<dbReference type="OrthoDB" id="9808302at2"/>
<dbReference type="UniPathway" id="UPA00148"/>
<dbReference type="Proteomes" id="UP000002724">
    <property type="component" value="Chromosome"/>
</dbReference>
<dbReference type="GO" id="GO:0015420">
    <property type="term" value="F:ABC-type vitamin B12 transporter activity"/>
    <property type="evidence" value="ECO:0007669"/>
    <property type="project" value="UniProtKB-UniRule"/>
</dbReference>
<dbReference type="GO" id="GO:0003824">
    <property type="term" value="F:catalytic activity"/>
    <property type="evidence" value="ECO:0007669"/>
    <property type="project" value="InterPro"/>
</dbReference>
<dbReference type="GO" id="GO:0009236">
    <property type="term" value="P:cobalamin biosynthetic process"/>
    <property type="evidence" value="ECO:0007669"/>
    <property type="project" value="UniProtKB-UniRule"/>
</dbReference>
<dbReference type="CDD" id="cd05389">
    <property type="entry name" value="CobQ_N"/>
    <property type="match status" value="1"/>
</dbReference>
<dbReference type="CDD" id="cd01750">
    <property type="entry name" value="GATase1_CobQ"/>
    <property type="match status" value="1"/>
</dbReference>
<dbReference type="Gene3D" id="3.40.50.880">
    <property type="match status" value="1"/>
</dbReference>
<dbReference type="Gene3D" id="3.40.50.300">
    <property type="entry name" value="P-loop containing nucleotide triphosphate hydrolases"/>
    <property type="match status" value="1"/>
</dbReference>
<dbReference type="HAMAP" id="MF_00028">
    <property type="entry name" value="CobQ"/>
    <property type="match status" value="1"/>
</dbReference>
<dbReference type="InterPro" id="IPR029062">
    <property type="entry name" value="Class_I_gatase-like"/>
</dbReference>
<dbReference type="InterPro" id="IPR002586">
    <property type="entry name" value="CobQ/CobB/MinD/ParA_Nub-bd_dom"/>
</dbReference>
<dbReference type="InterPro" id="IPR033949">
    <property type="entry name" value="CobQ_GATase1"/>
</dbReference>
<dbReference type="InterPro" id="IPR047045">
    <property type="entry name" value="CobQ_N"/>
</dbReference>
<dbReference type="InterPro" id="IPR004459">
    <property type="entry name" value="CobQ_synth"/>
</dbReference>
<dbReference type="InterPro" id="IPR011698">
    <property type="entry name" value="GATase_3"/>
</dbReference>
<dbReference type="InterPro" id="IPR027417">
    <property type="entry name" value="P-loop_NTPase"/>
</dbReference>
<dbReference type="NCBIfam" id="TIGR00313">
    <property type="entry name" value="cobQ"/>
    <property type="match status" value="1"/>
</dbReference>
<dbReference type="NCBIfam" id="NF001989">
    <property type="entry name" value="PRK00784.1"/>
    <property type="match status" value="1"/>
</dbReference>
<dbReference type="PANTHER" id="PTHR21343:SF1">
    <property type="entry name" value="COBYRIC ACID SYNTHASE"/>
    <property type="match status" value="1"/>
</dbReference>
<dbReference type="PANTHER" id="PTHR21343">
    <property type="entry name" value="DETHIOBIOTIN SYNTHETASE"/>
    <property type="match status" value="1"/>
</dbReference>
<dbReference type="Pfam" id="PF01656">
    <property type="entry name" value="CbiA"/>
    <property type="match status" value="1"/>
</dbReference>
<dbReference type="Pfam" id="PF07685">
    <property type="entry name" value="GATase_3"/>
    <property type="match status" value="1"/>
</dbReference>
<dbReference type="SUPFAM" id="SSF52317">
    <property type="entry name" value="Class I glutamine amidotransferase-like"/>
    <property type="match status" value="1"/>
</dbReference>
<dbReference type="SUPFAM" id="SSF52540">
    <property type="entry name" value="P-loop containing nucleoside triphosphate hydrolases"/>
    <property type="match status" value="1"/>
</dbReference>
<dbReference type="PROSITE" id="PS51274">
    <property type="entry name" value="GATASE_COBBQ"/>
    <property type="match status" value="1"/>
</dbReference>
<keyword id="KW-0169">Cobalamin biosynthesis</keyword>
<keyword id="KW-0315">Glutamine amidotransferase</keyword>
<keyword id="KW-1185">Reference proteome</keyword>
<comment type="function">
    <text evidence="1">Catalyzes amidations at positions B, D, E, and G on adenosylcobyrinic A,C-diamide. NH(2) groups are provided by glutamine, and one molecule of ATP is hydrogenolyzed for each amidation.</text>
</comment>
<comment type="pathway">
    <text evidence="1">Cofactor biosynthesis; adenosylcobalamin biosynthesis.</text>
</comment>
<comment type="similarity">
    <text evidence="1">Belongs to the CobB/CobQ family. CobQ subfamily.</text>
</comment>
<proteinExistence type="inferred from homology"/>
<evidence type="ECO:0000255" key="1">
    <source>
        <dbReference type="HAMAP-Rule" id="MF_00028"/>
    </source>
</evidence>
<sequence>MVKAEHESRALAIFGTASDVGKSIVATALCRIFNNAGIDVAPYKAQNMSNNSGVTPDGCEIGRAQIVQAEAARVVPTADMNPVLLKPNSDTGAQVVLQGKVCSTETAKGYFRDTSLWAEAARESLERLMKRHEVVVIEGAGSCAEMNLYDRDFVNFRTARLSGASVILVADIDRGGVFGQVVGTLAVLPAEDRALVKGVIINRFRGDIDLFRDGVEMLESMTGIPVLGVIPYFRGFAIDAEDAVPLSAKVDPAGGPEEGKIGVAAIYFPHISNFTDLSPLEHDPAVELHYLHYPRSLKGYKALILPGSKNVRGDLAWLYSLGWEAEIRAFRAEGGIIMGICGGYQMLGNSIADPYGVEGSAGTTKALALLDVETVLEQDKCLANARGTVIGTSAEASGYEIHMGRSVVSDLCTPFIRVTARNNRPEDELDGAVSSDGRVMGSYFHALFDESSVKQWFLSLLEPSYRLQKHEKGRQESYELLADHFSSHLDLNKIFTIIDKVHS</sequence>
<organism>
    <name type="scientific">Pelodictyon phaeoclathratiforme (strain DSM 5477 / BU-1)</name>
    <dbReference type="NCBI Taxonomy" id="324925"/>
    <lineage>
        <taxon>Bacteria</taxon>
        <taxon>Pseudomonadati</taxon>
        <taxon>Chlorobiota</taxon>
        <taxon>Chlorobiia</taxon>
        <taxon>Chlorobiales</taxon>
        <taxon>Chlorobiaceae</taxon>
        <taxon>Chlorobium/Pelodictyon group</taxon>
        <taxon>Pelodictyon</taxon>
    </lineage>
</organism>
<gene>
    <name evidence="1" type="primary">cobQ</name>
    <name type="ordered locus">Ppha_1264</name>
</gene>
<feature type="chain" id="PRO_1000090238" description="Cobyric acid synthase">
    <location>
        <begin position="1"/>
        <end position="503"/>
    </location>
</feature>
<feature type="domain" description="GATase cobBQ-type" evidence="1">
    <location>
        <begin position="260"/>
        <end position="453"/>
    </location>
</feature>
<feature type="active site" description="Nucleophile" evidence="1">
    <location>
        <position position="341"/>
    </location>
</feature>
<feature type="active site" evidence="1">
    <location>
        <position position="445"/>
    </location>
</feature>